<proteinExistence type="evidence at protein level"/>
<dbReference type="EMBL" id="DQ464283">
    <property type="protein sequence ID" value="ABG27006.1"/>
    <property type="molecule type" value="mRNA"/>
</dbReference>
<dbReference type="EMBL" id="EU293793">
    <property type="protein sequence ID" value="ABZ89720.1"/>
    <property type="molecule type" value="Genomic_DNA"/>
</dbReference>
<dbReference type="SMR" id="A5X2W8"/>
<dbReference type="GO" id="GO:0005576">
    <property type="term" value="C:extracellular region"/>
    <property type="evidence" value="ECO:0007669"/>
    <property type="project" value="UniProtKB-SubCell"/>
</dbReference>
<dbReference type="GO" id="GO:0090729">
    <property type="term" value="F:toxin activity"/>
    <property type="evidence" value="ECO:0007669"/>
    <property type="project" value="UniProtKB-KW"/>
</dbReference>
<dbReference type="CDD" id="cd00206">
    <property type="entry name" value="TFP_snake_toxin"/>
    <property type="match status" value="1"/>
</dbReference>
<dbReference type="Gene3D" id="2.10.60.10">
    <property type="entry name" value="CD59"/>
    <property type="match status" value="1"/>
</dbReference>
<dbReference type="InterPro" id="IPR003571">
    <property type="entry name" value="Snake_3FTx"/>
</dbReference>
<dbReference type="InterPro" id="IPR045860">
    <property type="entry name" value="Snake_toxin-like_sf"/>
</dbReference>
<dbReference type="InterPro" id="IPR018354">
    <property type="entry name" value="Snake_toxin_con_site"/>
</dbReference>
<dbReference type="InterPro" id="IPR054131">
    <property type="entry name" value="Toxin_cobra-type"/>
</dbReference>
<dbReference type="Pfam" id="PF21947">
    <property type="entry name" value="Toxin_cobra-type"/>
    <property type="match status" value="1"/>
</dbReference>
<dbReference type="SUPFAM" id="SSF57302">
    <property type="entry name" value="Snake toxin-like"/>
    <property type="match status" value="1"/>
</dbReference>
<dbReference type="PROSITE" id="PS00272">
    <property type="entry name" value="SNAKE_TOXIN"/>
    <property type="match status" value="1"/>
</dbReference>
<protein>
    <recommendedName>
        <fullName evidence="4 5">Three-finger toxin 3</fullName>
    </recommendedName>
</protein>
<evidence type="ECO:0000250" key="1"/>
<evidence type="ECO:0000255" key="2"/>
<evidence type="ECO:0000305" key="3"/>
<evidence type="ECO:0000312" key="4">
    <source>
        <dbReference type="EMBL" id="ABG27006.1"/>
    </source>
</evidence>
<evidence type="ECO:0000312" key="5">
    <source>
        <dbReference type="EMBL" id="ABZ89720.1"/>
    </source>
</evidence>
<name>3NX3_SISCA</name>
<comment type="subcellular location">
    <subcellularLocation>
        <location evidence="1">Secreted</location>
    </subcellularLocation>
</comment>
<comment type="tissue specificity">
    <text evidence="3">Expressed by the venom gland.</text>
</comment>
<comment type="similarity">
    <text evidence="3">Belongs to the three-finger toxin family. Ancestral subfamily.</text>
</comment>
<sequence>MKTLLLILGVVAFVYLEPGYTTNCFTCTTWTLSCREFEKCPPDKGTCFKRWNSTGIAIRRRYTRGCAAACPNPVGNEKVFCCVTDNCNK</sequence>
<feature type="signal peptide" evidence="2">
    <location>
        <begin position="1"/>
        <end position="16"/>
    </location>
</feature>
<feature type="chain" id="PRO_0000316183" description="Three-finger toxin 3">
    <location>
        <begin position="17"/>
        <end position="89"/>
    </location>
</feature>
<feature type="disulfide bond">
    <location>
        <begin position="24"/>
        <end position="47"/>
    </location>
</feature>
<feature type="disulfide bond">
    <location>
        <begin position="40"/>
        <end position="66"/>
    </location>
</feature>
<feature type="disulfide bond">
    <location>
        <begin position="70"/>
        <end position="81"/>
    </location>
</feature>
<feature type="disulfide bond">
    <location>
        <begin position="82"/>
        <end position="87"/>
    </location>
</feature>
<accession>A5X2W8</accession>
<accession>B4Y146</accession>
<organism>
    <name type="scientific">Sistrurus catenatus edwardsii</name>
    <name type="common">Desert massasauga</name>
    <name type="synonym">Crotalophorus edwardsii</name>
    <dbReference type="NCBI Taxonomy" id="8762"/>
    <lineage>
        <taxon>Eukaryota</taxon>
        <taxon>Metazoa</taxon>
        <taxon>Chordata</taxon>
        <taxon>Craniata</taxon>
        <taxon>Vertebrata</taxon>
        <taxon>Euteleostomi</taxon>
        <taxon>Lepidosauria</taxon>
        <taxon>Squamata</taxon>
        <taxon>Bifurcata</taxon>
        <taxon>Unidentata</taxon>
        <taxon>Episquamata</taxon>
        <taxon>Toxicofera</taxon>
        <taxon>Serpentes</taxon>
        <taxon>Colubroidea</taxon>
        <taxon>Viperidae</taxon>
        <taxon>Crotalinae</taxon>
        <taxon>Sistrurus</taxon>
    </lineage>
</organism>
<keyword id="KW-1015">Disulfide bond</keyword>
<keyword id="KW-0964">Secreted</keyword>
<keyword id="KW-0732">Signal</keyword>
<keyword id="KW-0800">Toxin</keyword>
<reference key="1">
    <citation type="submission" date="2006-03" db="EMBL/GenBank/DDBJ databases">
        <title>cDNA clones from a library of Sistrurus catenatus edwardsii venom gland.</title>
        <authorList>
            <person name="Kini R.M."/>
            <person name="Mackessy S.P."/>
            <person name="Pahari S."/>
        </authorList>
    </citation>
    <scope>NUCLEOTIDE SEQUENCE [MRNA]</scope>
</reference>
<reference key="2">
    <citation type="journal article" date="2008" name="BMC Evol. Biol.">
        <title>Accelerated exchange of exon segments in Viperid three-finger toxin genes (Sistrurus catenatus edwardsii; Desert Massasauga).</title>
        <authorList>
            <person name="Doley R."/>
            <person name="Pahari S."/>
            <person name="Mackessy S.P."/>
            <person name="Kini R.M."/>
        </authorList>
    </citation>
    <scope>NUCLEOTIDE SEQUENCE [GENOMIC DNA]</scope>
    <source>
        <tissue>Liver</tissue>
    </source>
</reference>